<evidence type="ECO:0000255" key="1">
    <source>
        <dbReference type="HAMAP-Rule" id="MF_00082"/>
    </source>
</evidence>
<protein>
    <recommendedName>
        <fullName evidence="1">Acetylglutamate kinase</fullName>
        <ecNumber evidence="1">2.7.2.8</ecNumber>
    </recommendedName>
    <alternativeName>
        <fullName evidence="1">N-acetyl-L-glutamate 5-phosphotransferase</fullName>
    </alternativeName>
    <alternativeName>
        <fullName evidence="1">NAG kinase</fullName>
        <shortName evidence="1">NAGK</shortName>
    </alternativeName>
</protein>
<reference key="1">
    <citation type="journal article" date="2006" name="Nat. Biotechnol.">
        <title>Genome sequence of the ubiquitous hydrocarbon-degrading marine bacterium Alcanivorax borkumensis.</title>
        <authorList>
            <person name="Schneiker S."/>
            <person name="Martins dos Santos V.A.P."/>
            <person name="Bartels D."/>
            <person name="Bekel T."/>
            <person name="Brecht M."/>
            <person name="Buhrmester J."/>
            <person name="Chernikova T.N."/>
            <person name="Denaro R."/>
            <person name="Ferrer M."/>
            <person name="Gertler C."/>
            <person name="Goesmann A."/>
            <person name="Golyshina O.V."/>
            <person name="Kaminski F."/>
            <person name="Khachane A.N."/>
            <person name="Lang S."/>
            <person name="Linke B."/>
            <person name="McHardy A.C."/>
            <person name="Meyer F."/>
            <person name="Nechitaylo T."/>
            <person name="Puehler A."/>
            <person name="Regenhardt D."/>
            <person name="Rupp O."/>
            <person name="Sabirova J.S."/>
            <person name="Selbitschka W."/>
            <person name="Yakimov M.M."/>
            <person name="Timmis K.N."/>
            <person name="Vorhoelter F.-J."/>
            <person name="Weidner S."/>
            <person name="Kaiser O."/>
            <person name="Golyshin P.N."/>
        </authorList>
    </citation>
    <scope>NUCLEOTIDE SEQUENCE [LARGE SCALE GENOMIC DNA]</scope>
    <source>
        <strain>ATCC 700651 / DSM 11573 / NCIMB 13689 / SK2</strain>
    </source>
</reference>
<accession>Q0VT62</accession>
<gene>
    <name evidence="1" type="primary">argB</name>
    <name type="ordered locus">ABO_0210</name>
</gene>
<name>ARGB_ALCBS</name>
<feature type="chain" id="PRO_0000264678" description="Acetylglutamate kinase">
    <location>
        <begin position="1"/>
        <end position="299"/>
    </location>
</feature>
<feature type="binding site" evidence="1">
    <location>
        <begin position="66"/>
        <end position="67"/>
    </location>
    <ligand>
        <name>substrate</name>
    </ligand>
</feature>
<feature type="binding site" evidence="1">
    <location>
        <position position="88"/>
    </location>
    <ligand>
        <name>substrate</name>
    </ligand>
</feature>
<feature type="binding site" evidence="1">
    <location>
        <position position="196"/>
    </location>
    <ligand>
        <name>substrate</name>
    </ligand>
</feature>
<feature type="site" description="Transition state stabilizer" evidence="1">
    <location>
        <position position="31"/>
    </location>
</feature>
<feature type="site" description="Transition state stabilizer" evidence="1">
    <location>
        <position position="256"/>
    </location>
</feature>
<dbReference type="EC" id="2.7.2.8" evidence="1"/>
<dbReference type="EMBL" id="AM286690">
    <property type="protein sequence ID" value="CAL15658.1"/>
    <property type="molecule type" value="Genomic_DNA"/>
</dbReference>
<dbReference type="RefSeq" id="WP_011587507.1">
    <property type="nucleotide sequence ID" value="NC_008260.1"/>
</dbReference>
<dbReference type="SMR" id="Q0VT62"/>
<dbReference type="STRING" id="393595.ABO_0210"/>
<dbReference type="KEGG" id="abo:ABO_0210"/>
<dbReference type="eggNOG" id="COG0548">
    <property type="taxonomic scope" value="Bacteria"/>
</dbReference>
<dbReference type="HOGENOM" id="CLU_053680_0_0_6"/>
<dbReference type="OrthoDB" id="9803155at2"/>
<dbReference type="UniPathway" id="UPA00068">
    <property type="reaction ID" value="UER00107"/>
</dbReference>
<dbReference type="Proteomes" id="UP000008871">
    <property type="component" value="Chromosome"/>
</dbReference>
<dbReference type="GO" id="GO:0005737">
    <property type="term" value="C:cytoplasm"/>
    <property type="evidence" value="ECO:0007669"/>
    <property type="project" value="UniProtKB-SubCell"/>
</dbReference>
<dbReference type="GO" id="GO:0003991">
    <property type="term" value="F:acetylglutamate kinase activity"/>
    <property type="evidence" value="ECO:0007669"/>
    <property type="project" value="UniProtKB-UniRule"/>
</dbReference>
<dbReference type="GO" id="GO:0005524">
    <property type="term" value="F:ATP binding"/>
    <property type="evidence" value="ECO:0007669"/>
    <property type="project" value="UniProtKB-UniRule"/>
</dbReference>
<dbReference type="GO" id="GO:0042450">
    <property type="term" value="P:arginine biosynthetic process via ornithine"/>
    <property type="evidence" value="ECO:0007669"/>
    <property type="project" value="UniProtKB-UniRule"/>
</dbReference>
<dbReference type="GO" id="GO:0006526">
    <property type="term" value="P:L-arginine biosynthetic process"/>
    <property type="evidence" value="ECO:0007669"/>
    <property type="project" value="UniProtKB-UniPathway"/>
</dbReference>
<dbReference type="CDD" id="cd04250">
    <property type="entry name" value="AAK_NAGK-C"/>
    <property type="match status" value="1"/>
</dbReference>
<dbReference type="FunFam" id="3.40.1160.10:FF:000004">
    <property type="entry name" value="Acetylglutamate kinase"/>
    <property type="match status" value="1"/>
</dbReference>
<dbReference type="Gene3D" id="3.40.1160.10">
    <property type="entry name" value="Acetylglutamate kinase-like"/>
    <property type="match status" value="1"/>
</dbReference>
<dbReference type="HAMAP" id="MF_00082">
    <property type="entry name" value="ArgB"/>
    <property type="match status" value="1"/>
</dbReference>
<dbReference type="InterPro" id="IPR036393">
    <property type="entry name" value="AceGlu_kinase-like_sf"/>
</dbReference>
<dbReference type="InterPro" id="IPR004662">
    <property type="entry name" value="AcgluKinase_fam"/>
</dbReference>
<dbReference type="InterPro" id="IPR037528">
    <property type="entry name" value="ArgB"/>
</dbReference>
<dbReference type="InterPro" id="IPR001048">
    <property type="entry name" value="Asp/Glu/Uridylate_kinase"/>
</dbReference>
<dbReference type="InterPro" id="IPR001057">
    <property type="entry name" value="Glu/AcGlu_kinase"/>
</dbReference>
<dbReference type="InterPro" id="IPR041727">
    <property type="entry name" value="NAGK-C"/>
</dbReference>
<dbReference type="NCBIfam" id="TIGR00761">
    <property type="entry name" value="argB"/>
    <property type="match status" value="1"/>
</dbReference>
<dbReference type="PANTHER" id="PTHR23342">
    <property type="entry name" value="N-ACETYLGLUTAMATE SYNTHASE"/>
    <property type="match status" value="1"/>
</dbReference>
<dbReference type="PANTHER" id="PTHR23342:SF0">
    <property type="entry name" value="N-ACETYLGLUTAMATE SYNTHASE, MITOCHONDRIAL"/>
    <property type="match status" value="1"/>
</dbReference>
<dbReference type="Pfam" id="PF00696">
    <property type="entry name" value="AA_kinase"/>
    <property type="match status" value="1"/>
</dbReference>
<dbReference type="PIRSF" id="PIRSF000728">
    <property type="entry name" value="NAGK"/>
    <property type="match status" value="1"/>
</dbReference>
<dbReference type="PRINTS" id="PR00474">
    <property type="entry name" value="GLU5KINASE"/>
</dbReference>
<dbReference type="SUPFAM" id="SSF53633">
    <property type="entry name" value="Carbamate kinase-like"/>
    <property type="match status" value="1"/>
</dbReference>
<keyword id="KW-0028">Amino-acid biosynthesis</keyword>
<keyword id="KW-0055">Arginine biosynthesis</keyword>
<keyword id="KW-0067">ATP-binding</keyword>
<keyword id="KW-0963">Cytoplasm</keyword>
<keyword id="KW-0418">Kinase</keyword>
<keyword id="KW-0547">Nucleotide-binding</keyword>
<keyword id="KW-1185">Reference proteome</keyword>
<keyword id="KW-0808">Transferase</keyword>
<comment type="function">
    <text evidence="1">Catalyzes the ATP-dependent phosphorylation of N-acetyl-L-glutamate.</text>
</comment>
<comment type="catalytic activity">
    <reaction evidence="1">
        <text>N-acetyl-L-glutamate + ATP = N-acetyl-L-glutamyl 5-phosphate + ADP</text>
        <dbReference type="Rhea" id="RHEA:14629"/>
        <dbReference type="ChEBI" id="CHEBI:30616"/>
        <dbReference type="ChEBI" id="CHEBI:44337"/>
        <dbReference type="ChEBI" id="CHEBI:57936"/>
        <dbReference type="ChEBI" id="CHEBI:456216"/>
        <dbReference type="EC" id="2.7.2.8"/>
    </reaction>
</comment>
<comment type="pathway">
    <text evidence="1">Amino-acid biosynthesis; L-arginine biosynthesis; N(2)-acetyl-L-ornithine from L-glutamate: step 2/4.</text>
</comment>
<comment type="subcellular location">
    <subcellularLocation>
        <location evidence="1">Cytoplasm</location>
    </subcellularLocation>
</comment>
<comment type="similarity">
    <text evidence="1">Belongs to the acetylglutamate kinase family. ArgB subfamily.</text>
</comment>
<organism>
    <name type="scientific">Alcanivorax borkumensis (strain ATCC 700651 / DSM 11573 / NCIMB 13689 / SK2)</name>
    <dbReference type="NCBI Taxonomy" id="393595"/>
    <lineage>
        <taxon>Bacteria</taxon>
        <taxon>Pseudomonadati</taxon>
        <taxon>Pseudomonadota</taxon>
        <taxon>Gammaproteobacteria</taxon>
        <taxon>Oceanospirillales</taxon>
        <taxon>Alcanivoracaceae</taxon>
        <taxon>Alcanivorax</taxon>
    </lineage>
</organism>
<sequence length="299" mass="31829">MDANSAHDTARILIEALPYIQRFAGTTVVIKYGGNAMENEELKNSFARDVVMMKQVGIHPVIVHGGGPQIGELLERLGKESKFVQGMRVTDRETMDVVQMVLGGLVNKDIVNLIQHNGGQAIGLTGKDGRLIKARKMVLKASDADSPALQASEIIDIGHVGEVQGIDTRIIDLLAGSDFIPVIAPIGVDDNGASYNINADLVAGKVAEVLRAEKLILLTNVPGLKDKQGQILTGLTTERVNSLIKDGTIYGGMLPKIGCALEAVQNGVHTAHIIDGRVSHAVLLEILTDKGIGTLISKD</sequence>
<proteinExistence type="inferred from homology"/>